<feature type="chain" id="PRO_1000070125" description="Membrane protein insertase YidC">
    <location>
        <begin position="1"/>
        <end position="545"/>
    </location>
</feature>
<feature type="transmembrane region" description="Helical" evidence="1">
    <location>
        <begin position="350"/>
        <end position="370"/>
    </location>
</feature>
<feature type="transmembrane region" description="Helical" evidence="1">
    <location>
        <begin position="424"/>
        <end position="444"/>
    </location>
</feature>
<feature type="transmembrane region" description="Helical" evidence="1">
    <location>
        <begin position="461"/>
        <end position="481"/>
    </location>
</feature>
<feature type="transmembrane region" description="Helical" evidence="1">
    <location>
        <begin position="498"/>
        <end position="518"/>
    </location>
</feature>
<protein>
    <recommendedName>
        <fullName evidence="1">Membrane protein insertase YidC</fullName>
    </recommendedName>
    <alternativeName>
        <fullName evidence="1">Foldase YidC</fullName>
    </alternativeName>
    <alternativeName>
        <fullName evidence="1">Membrane integrase YidC</fullName>
    </alternativeName>
    <alternativeName>
        <fullName evidence="1">Membrane protein YidC</fullName>
    </alternativeName>
</protein>
<proteinExistence type="inferred from homology"/>
<dbReference type="EMBL" id="AM421808">
    <property type="protein sequence ID" value="CAM09627.1"/>
    <property type="molecule type" value="Genomic_DNA"/>
</dbReference>
<dbReference type="RefSeq" id="WP_002221552.1">
    <property type="nucleotide sequence ID" value="NC_008767.1"/>
</dbReference>
<dbReference type="SMR" id="A1KRZ8"/>
<dbReference type="KEGG" id="nmc:NMC0316"/>
<dbReference type="HOGENOM" id="CLU_016535_3_0_4"/>
<dbReference type="Proteomes" id="UP000002286">
    <property type="component" value="Chromosome"/>
</dbReference>
<dbReference type="GO" id="GO:0005886">
    <property type="term" value="C:plasma membrane"/>
    <property type="evidence" value="ECO:0007669"/>
    <property type="project" value="UniProtKB-SubCell"/>
</dbReference>
<dbReference type="GO" id="GO:0032977">
    <property type="term" value="F:membrane insertase activity"/>
    <property type="evidence" value="ECO:0007669"/>
    <property type="project" value="InterPro"/>
</dbReference>
<dbReference type="GO" id="GO:0051205">
    <property type="term" value="P:protein insertion into membrane"/>
    <property type="evidence" value="ECO:0007669"/>
    <property type="project" value="TreeGrafter"/>
</dbReference>
<dbReference type="GO" id="GO:0015031">
    <property type="term" value="P:protein transport"/>
    <property type="evidence" value="ECO:0007669"/>
    <property type="project" value="UniProtKB-KW"/>
</dbReference>
<dbReference type="CDD" id="cd20070">
    <property type="entry name" value="5TM_YidC_Alb3"/>
    <property type="match status" value="1"/>
</dbReference>
<dbReference type="CDD" id="cd19961">
    <property type="entry name" value="EcYidC-like_peri"/>
    <property type="match status" value="1"/>
</dbReference>
<dbReference type="FunFam" id="2.70.98.90:FF:000003">
    <property type="entry name" value="Membrane protein insertase YidC"/>
    <property type="match status" value="1"/>
</dbReference>
<dbReference type="Gene3D" id="2.70.98.90">
    <property type="match status" value="1"/>
</dbReference>
<dbReference type="HAMAP" id="MF_01810">
    <property type="entry name" value="YidC_type1"/>
    <property type="match status" value="1"/>
</dbReference>
<dbReference type="InterPro" id="IPR019998">
    <property type="entry name" value="Membr_insert_YidC"/>
</dbReference>
<dbReference type="InterPro" id="IPR028053">
    <property type="entry name" value="Membr_insert_YidC_N"/>
</dbReference>
<dbReference type="InterPro" id="IPR001708">
    <property type="entry name" value="YidC/ALB3/OXA1/COX18"/>
</dbReference>
<dbReference type="InterPro" id="IPR028055">
    <property type="entry name" value="YidC/Oxa/ALB_C"/>
</dbReference>
<dbReference type="InterPro" id="IPR047196">
    <property type="entry name" value="YidC_ALB_C"/>
</dbReference>
<dbReference type="InterPro" id="IPR038221">
    <property type="entry name" value="YidC_periplasmic_sf"/>
</dbReference>
<dbReference type="NCBIfam" id="NF002352">
    <property type="entry name" value="PRK01318.1-3"/>
    <property type="match status" value="1"/>
</dbReference>
<dbReference type="NCBIfam" id="TIGR03593">
    <property type="entry name" value="yidC_nterm"/>
    <property type="match status" value="1"/>
</dbReference>
<dbReference type="NCBIfam" id="TIGR03592">
    <property type="entry name" value="yidC_oxa1_cterm"/>
    <property type="match status" value="1"/>
</dbReference>
<dbReference type="PANTHER" id="PTHR12428:SF65">
    <property type="entry name" value="CYTOCHROME C OXIDASE ASSEMBLY PROTEIN COX18, MITOCHONDRIAL"/>
    <property type="match status" value="1"/>
</dbReference>
<dbReference type="PANTHER" id="PTHR12428">
    <property type="entry name" value="OXA1"/>
    <property type="match status" value="1"/>
</dbReference>
<dbReference type="Pfam" id="PF02096">
    <property type="entry name" value="60KD_IMP"/>
    <property type="match status" value="1"/>
</dbReference>
<dbReference type="Pfam" id="PF14849">
    <property type="entry name" value="YidC_periplas"/>
    <property type="match status" value="1"/>
</dbReference>
<dbReference type="PRINTS" id="PR00701">
    <property type="entry name" value="60KDINNERMP"/>
</dbReference>
<dbReference type="PRINTS" id="PR01900">
    <property type="entry name" value="YIDCPROTEIN"/>
</dbReference>
<evidence type="ECO:0000255" key="1">
    <source>
        <dbReference type="HAMAP-Rule" id="MF_01810"/>
    </source>
</evidence>
<name>YIDC_NEIMF</name>
<organism>
    <name type="scientific">Neisseria meningitidis serogroup C / serotype 2a (strain ATCC 700532 / DSM 15464 / FAM18)</name>
    <dbReference type="NCBI Taxonomy" id="272831"/>
    <lineage>
        <taxon>Bacteria</taxon>
        <taxon>Pseudomonadati</taxon>
        <taxon>Pseudomonadota</taxon>
        <taxon>Betaproteobacteria</taxon>
        <taxon>Neisseriales</taxon>
        <taxon>Neisseriaceae</taxon>
        <taxon>Neisseria</taxon>
    </lineage>
</organism>
<sequence>MDFKRLTAFFAIALVIMIGWEKMFPTPKPVPAPQQAAQQQAVTASAEAALAPATPITVTTDTVQAVIDEKSGDLRRLTLLKYKATGDENKPFILFGDGKEYTYVAQSELLDAQGNNILKGIGFSAPKKQYSLEGDKVEVRLSAPETRGLKIDKVYTFTKGSYLVNVRFDIANGSGQTANLSADYRIVRDHSEPEGQGYFTHSYVGPVVYTPEGNFQKVSFSDLDDDAKSGKSEAEYIRKTPTGWLGMIEHHFMSTWILQPKGRQSVCAAGECNIDIKRRNDKLYSTSVSVPLAAIQNGAKAEASINLYAGPQTTSVIANIADNLQLAKDYGKVHWFASPLFWLLNQLHNIIGNWGWAIIVLTIIVKAVLYPLTNASYRSMAKMRAAAPKLQAIKEKYGDDRMAQQQAMMQLYTDEKINPLGGCLPMLLQIPVFIGLYWALFASVELRQAPWLGWITDLSRADPYYILPIIMAATMFAQTYLNPPPTDPMQAKMMKIMPLVFSVMFFFFPAGLVLYWVVNNLLTIAQQWHINRSIEKQRAQGEVVS</sequence>
<accession>A1KRZ8</accession>
<keyword id="KW-0997">Cell inner membrane</keyword>
<keyword id="KW-1003">Cell membrane</keyword>
<keyword id="KW-0143">Chaperone</keyword>
<keyword id="KW-0472">Membrane</keyword>
<keyword id="KW-0653">Protein transport</keyword>
<keyword id="KW-0812">Transmembrane</keyword>
<keyword id="KW-1133">Transmembrane helix</keyword>
<keyword id="KW-0813">Transport</keyword>
<gene>
    <name evidence="1" type="primary">yidC</name>
    <name type="ordered locus">NMC0316</name>
</gene>
<reference key="1">
    <citation type="journal article" date="2007" name="PLoS Genet.">
        <title>Meningococcal genetic variation mechanisms viewed through comparative analysis of serogroup C strain FAM18.</title>
        <authorList>
            <person name="Bentley S.D."/>
            <person name="Vernikos G.S."/>
            <person name="Snyder L.A.S."/>
            <person name="Churcher C."/>
            <person name="Arrowsmith C."/>
            <person name="Chillingworth T."/>
            <person name="Cronin A."/>
            <person name="Davis P.H."/>
            <person name="Holroyd N.E."/>
            <person name="Jagels K."/>
            <person name="Maddison M."/>
            <person name="Moule S."/>
            <person name="Rabbinowitsch E."/>
            <person name="Sharp S."/>
            <person name="Unwin L."/>
            <person name="Whitehead S."/>
            <person name="Quail M.A."/>
            <person name="Achtman M."/>
            <person name="Barrell B.G."/>
            <person name="Saunders N.J."/>
            <person name="Parkhill J."/>
        </authorList>
    </citation>
    <scope>NUCLEOTIDE SEQUENCE [LARGE SCALE GENOMIC DNA]</scope>
    <source>
        <strain>ATCC 700532 / DSM 15464 / FAM18</strain>
    </source>
</reference>
<comment type="function">
    <text evidence="1">Required for the insertion and/or proper folding and/or complex formation of integral membrane proteins into the membrane. Involved in integration of membrane proteins that insert both dependently and independently of the Sec translocase complex, as well as at least some lipoproteins. Aids folding of multispanning membrane proteins.</text>
</comment>
<comment type="subunit">
    <text evidence="1">Interacts with the Sec translocase complex via SecD. Specifically interacts with transmembrane segments of nascent integral membrane proteins during membrane integration.</text>
</comment>
<comment type="subcellular location">
    <subcellularLocation>
        <location evidence="1">Cell inner membrane</location>
        <topology evidence="1">Multi-pass membrane protein</topology>
    </subcellularLocation>
</comment>
<comment type="similarity">
    <text evidence="1">Belongs to the OXA1/ALB3/YidC family. Type 1 subfamily.</text>
</comment>